<keyword id="KW-0687">Ribonucleoprotein</keyword>
<keyword id="KW-0689">Ribosomal protein</keyword>
<name>RS2_RHOPB</name>
<dbReference type="EMBL" id="CP000301">
    <property type="protein sequence ID" value="ABD87987.1"/>
    <property type="molecule type" value="Genomic_DNA"/>
</dbReference>
<dbReference type="SMR" id="Q215E9"/>
<dbReference type="STRING" id="316056.RPC_2436"/>
<dbReference type="KEGG" id="rpc:RPC_2436"/>
<dbReference type="eggNOG" id="COG0052">
    <property type="taxonomic scope" value="Bacteria"/>
</dbReference>
<dbReference type="HOGENOM" id="CLU_040318_2_1_5"/>
<dbReference type="OrthoDB" id="9808036at2"/>
<dbReference type="GO" id="GO:0022627">
    <property type="term" value="C:cytosolic small ribosomal subunit"/>
    <property type="evidence" value="ECO:0007669"/>
    <property type="project" value="TreeGrafter"/>
</dbReference>
<dbReference type="GO" id="GO:0003735">
    <property type="term" value="F:structural constituent of ribosome"/>
    <property type="evidence" value="ECO:0007669"/>
    <property type="project" value="InterPro"/>
</dbReference>
<dbReference type="GO" id="GO:0006412">
    <property type="term" value="P:translation"/>
    <property type="evidence" value="ECO:0007669"/>
    <property type="project" value="UniProtKB-UniRule"/>
</dbReference>
<dbReference type="CDD" id="cd01425">
    <property type="entry name" value="RPS2"/>
    <property type="match status" value="1"/>
</dbReference>
<dbReference type="FunFam" id="1.10.287.610:FF:000001">
    <property type="entry name" value="30S ribosomal protein S2"/>
    <property type="match status" value="1"/>
</dbReference>
<dbReference type="Gene3D" id="3.40.50.10490">
    <property type="entry name" value="Glucose-6-phosphate isomerase like protein, domain 1"/>
    <property type="match status" value="1"/>
</dbReference>
<dbReference type="Gene3D" id="1.10.287.610">
    <property type="entry name" value="Helix hairpin bin"/>
    <property type="match status" value="1"/>
</dbReference>
<dbReference type="HAMAP" id="MF_00291_B">
    <property type="entry name" value="Ribosomal_uS2_B"/>
    <property type="match status" value="1"/>
</dbReference>
<dbReference type="InterPro" id="IPR001865">
    <property type="entry name" value="Ribosomal_uS2"/>
</dbReference>
<dbReference type="InterPro" id="IPR005706">
    <property type="entry name" value="Ribosomal_uS2_bac/mit/plastid"/>
</dbReference>
<dbReference type="InterPro" id="IPR018130">
    <property type="entry name" value="Ribosomal_uS2_CS"/>
</dbReference>
<dbReference type="InterPro" id="IPR023591">
    <property type="entry name" value="Ribosomal_uS2_flav_dom_sf"/>
</dbReference>
<dbReference type="NCBIfam" id="NF008966">
    <property type="entry name" value="PRK12311.1"/>
    <property type="match status" value="1"/>
</dbReference>
<dbReference type="NCBIfam" id="TIGR01011">
    <property type="entry name" value="rpsB_bact"/>
    <property type="match status" value="1"/>
</dbReference>
<dbReference type="PANTHER" id="PTHR12534">
    <property type="entry name" value="30S RIBOSOMAL PROTEIN S2 PROKARYOTIC AND ORGANELLAR"/>
    <property type="match status" value="1"/>
</dbReference>
<dbReference type="PANTHER" id="PTHR12534:SF0">
    <property type="entry name" value="SMALL RIBOSOMAL SUBUNIT PROTEIN US2M"/>
    <property type="match status" value="1"/>
</dbReference>
<dbReference type="Pfam" id="PF00318">
    <property type="entry name" value="Ribosomal_S2"/>
    <property type="match status" value="1"/>
</dbReference>
<dbReference type="PRINTS" id="PR00395">
    <property type="entry name" value="RIBOSOMALS2"/>
</dbReference>
<dbReference type="SUPFAM" id="SSF52313">
    <property type="entry name" value="Ribosomal protein S2"/>
    <property type="match status" value="1"/>
</dbReference>
<dbReference type="PROSITE" id="PS00962">
    <property type="entry name" value="RIBOSOMAL_S2_1"/>
    <property type="match status" value="1"/>
</dbReference>
<dbReference type="PROSITE" id="PS00963">
    <property type="entry name" value="RIBOSOMAL_S2_2"/>
    <property type="match status" value="1"/>
</dbReference>
<proteinExistence type="inferred from homology"/>
<gene>
    <name evidence="1" type="primary">rpsB</name>
    <name type="ordered locus">RPC_2436</name>
</gene>
<reference key="1">
    <citation type="submission" date="2006-03" db="EMBL/GenBank/DDBJ databases">
        <title>Complete sequence of Rhodopseudomonas palustris BisB18.</title>
        <authorList>
            <consortium name="US DOE Joint Genome Institute"/>
            <person name="Copeland A."/>
            <person name="Lucas S."/>
            <person name="Lapidus A."/>
            <person name="Barry K."/>
            <person name="Detter J.C."/>
            <person name="Glavina del Rio T."/>
            <person name="Hammon N."/>
            <person name="Israni S."/>
            <person name="Dalin E."/>
            <person name="Tice H."/>
            <person name="Pitluck S."/>
            <person name="Chain P."/>
            <person name="Malfatti S."/>
            <person name="Shin M."/>
            <person name="Vergez L."/>
            <person name="Schmutz J."/>
            <person name="Larimer F."/>
            <person name="Land M."/>
            <person name="Hauser L."/>
            <person name="Pelletier D.A."/>
            <person name="Kyrpides N."/>
            <person name="Anderson I."/>
            <person name="Oda Y."/>
            <person name="Harwood C.S."/>
            <person name="Richardson P."/>
        </authorList>
    </citation>
    <scope>NUCLEOTIDE SEQUENCE [LARGE SCALE GENOMIC DNA]</scope>
    <source>
        <strain>BisB18</strain>
    </source>
</reference>
<accession>Q215E9</accession>
<organism>
    <name type="scientific">Rhodopseudomonas palustris (strain BisB18)</name>
    <dbReference type="NCBI Taxonomy" id="316056"/>
    <lineage>
        <taxon>Bacteria</taxon>
        <taxon>Pseudomonadati</taxon>
        <taxon>Pseudomonadota</taxon>
        <taxon>Alphaproteobacteria</taxon>
        <taxon>Hyphomicrobiales</taxon>
        <taxon>Nitrobacteraceae</taxon>
        <taxon>Rhodopseudomonas</taxon>
    </lineage>
</organism>
<sequence>MALPEFSMRQLLEAGVHFGHQSHRWNPKMAEYIFGARNNIHIIDLAQTVPLLHRALQAVSDTVAKGGRVLFVGTKRQAQDGVAEAAKRSAQYFVNSRWLGGTLTNWKTISGSIKRLRHLDEVLNSGDANAYTKKERLTLQRERDKLDRSLGGIKDMGGLPDLIFVIDTNKEDIAIQEAQRLNIPVAAIVDTNCDPKGITYLVPGNDDAGRAITLYCDLIARAVIDGISRAQGDSGFDIGASVAPVREELPAAAAPTATAFQGLAGPRGTADDLKKLTGVSGAIEKKFNDLGIFHFWQLAELDRDTAHKIGEEVGLPSRADGWVAQAKAMTAEAE</sequence>
<comment type="similarity">
    <text evidence="1">Belongs to the universal ribosomal protein uS2 family.</text>
</comment>
<evidence type="ECO:0000255" key="1">
    <source>
        <dbReference type="HAMAP-Rule" id="MF_00291"/>
    </source>
</evidence>
<evidence type="ECO:0000305" key="2"/>
<feature type="chain" id="PRO_1000004048" description="Small ribosomal subunit protein uS2">
    <location>
        <begin position="1"/>
        <end position="334"/>
    </location>
</feature>
<protein>
    <recommendedName>
        <fullName evidence="1">Small ribosomal subunit protein uS2</fullName>
    </recommendedName>
    <alternativeName>
        <fullName evidence="2">30S ribosomal protein S2</fullName>
    </alternativeName>
</protein>